<gene>
    <name evidence="1" type="primary">miaA</name>
    <name type="ordered locus">PAM_275</name>
</gene>
<keyword id="KW-0067">ATP-binding</keyword>
<keyword id="KW-0460">Magnesium</keyword>
<keyword id="KW-0547">Nucleotide-binding</keyword>
<keyword id="KW-0808">Transferase</keyword>
<keyword id="KW-0819">tRNA processing</keyword>
<protein>
    <recommendedName>
        <fullName evidence="1">tRNA dimethylallyltransferase</fullName>
        <ecNumber evidence="1">2.5.1.75</ecNumber>
    </recommendedName>
    <alternativeName>
        <fullName evidence="1">Dimethylallyl diphosphate:tRNA dimethylallyltransferase</fullName>
        <shortName evidence="1">DMAPP:tRNA dimethylallyltransferase</shortName>
        <shortName evidence="1">DMATase</shortName>
    </alternativeName>
    <alternativeName>
        <fullName evidence="1">Isopentenyl-diphosphate:tRNA isopentenyltransferase</fullName>
        <shortName evidence="1">IPP transferase</shortName>
        <shortName evidence="1">IPPT</shortName>
        <shortName evidence="1">IPTase</shortName>
    </alternativeName>
</protein>
<dbReference type="EC" id="2.5.1.75" evidence="1"/>
<dbReference type="EMBL" id="AP006628">
    <property type="protein sequence ID" value="BAD04360.1"/>
    <property type="molecule type" value="Genomic_DNA"/>
</dbReference>
<dbReference type="SMR" id="Q6YQU8"/>
<dbReference type="STRING" id="262768.PAM_275"/>
<dbReference type="KEGG" id="poy:PAM_275"/>
<dbReference type="eggNOG" id="COG0324">
    <property type="taxonomic scope" value="Bacteria"/>
</dbReference>
<dbReference type="HOGENOM" id="CLU_032616_0_1_14"/>
<dbReference type="BioCyc" id="OYEL262768:G1G26-333-MONOMER"/>
<dbReference type="Proteomes" id="UP000002523">
    <property type="component" value="Chromosome"/>
</dbReference>
<dbReference type="GO" id="GO:0005524">
    <property type="term" value="F:ATP binding"/>
    <property type="evidence" value="ECO:0007669"/>
    <property type="project" value="UniProtKB-UniRule"/>
</dbReference>
<dbReference type="GO" id="GO:0052381">
    <property type="term" value="F:tRNA dimethylallyltransferase activity"/>
    <property type="evidence" value="ECO:0007669"/>
    <property type="project" value="UniProtKB-UniRule"/>
</dbReference>
<dbReference type="GO" id="GO:0006400">
    <property type="term" value="P:tRNA modification"/>
    <property type="evidence" value="ECO:0007669"/>
    <property type="project" value="TreeGrafter"/>
</dbReference>
<dbReference type="Gene3D" id="3.40.50.300">
    <property type="entry name" value="P-loop containing nucleotide triphosphate hydrolases"/>
    <property type="match status" value="1"/>
</dbReference>
<dbReference type="HAMAP" id="MF_00185">
    <property type="entry name" value="IPP_trans"/>
    <property type="match status" value="1"/>
</dbReference>
<dbReference type="InterPro" id="IPR039657">
    <property type="entry name" value="Dimethylallyltransferase"/>
</dbReference>
<dbReference type="InterPro" id="IPR018022">
    <property type="entry name" value="IPT"/>
</dbReference>
<dbReference type="InterPro" id="IPR027417">
    <property type="entry name" value="P-loop_NTPase"/>
</dbReference>
<dbReference type="NCBIfam" id="TIGR00174">
    <property type="entry name" value="miaA"/>
    <property type="match status" value="1"/>
</dbReference>
<dbReference type="PANTHER" id="PTHR11088">
    <property type="entry name" value="TRNA DIMETHYLALLYLTRANSFERASE"/>
    <property type="match status" value="1"/>
</dbReference>
<dbReference type="PANTHER" id="PTHR11088:SF60">
    <property type="entry name" value="TRNA DIMETHYLALLYLTRANSFERASE"/>
    <property type="match status" value="1"/>
</dbReference>
<dbReference type="Pfam" id="PF01715">
    <property type="entry name" value="IPPT"/>
    <property type="match status" value="1"/>
</dbReference>
<dbReference type="SUPFAM" id="SSF52540">
    <property type="entry name" value="P-loop containing nucleoside triphosphate hydrolases"/>
    <property type="match status" value="2"/>
</dbReference>
<reference key="1">
    <citation type="journal article" date="2004" name="Nat. Genet.">
        <title>Reductive evolution suggested from the complete genome sequence of a plant-pathogenic phytoplasma.</title>
        <authorList>
            <person name="Oshima K."/>
            <person name="Kakizawa S."/>
            <person name="Nishigawa H."/>
            <person name="Jung H.-Y."/>
            <person name="Wei W."/>
            <person name="Suzuki S."/>
            <person name="Arashida R."/>
            <person name="Nakata D."/>
            <person name="Miyata S."/>
            <person name="Ugaki M."/>
            <person name="Namba S."/>
        </authorList>
    </citation>
    <scope>NUCLEOTIDE SEQUENCE [LARGE SCALE GENOMIC DNA]</scope>
    <source>
        <strain>OY-M</strain>
    </source>
</reference>
<feature type="chain" id="PRO_1000020630" description="tRNA dimethylallyltransferase">
    <location>
        <begin position="1"/>
        <end position="291"/>
    </location>
</feature>
<feature type="region of interest" description="Interaction with substrate tRNA" evidence="1">
    <location>
        <begin position="34"/>
        <end position="37"/>
    </location>
</feature>
<feature type="binding site" evidence="1">
    <location>
        <begin position="9"/>
        <end position="16"/>
    </location>
    <ligand>
        <name>ATP</name>
        <dbReference type="ChEBI" id="CHEBI:30616"/>
    </ligand>
</feature>
<feature type="binding site" evidence="1">
    <location>
        <begin position="11"/>
        <end position="16"/>
    </location>
    <ligand>
        <name>substrate</name>
    </ligand>
</feature>
<feature type="site" description="Interaction with substrate tRNA" evidence="1">
    <location>
        <position position="96"/>
    </location>
</feature>
<comment type="function">
    <text evidence="1">Catalyzes the transfer of a dimethylallyl group onto the adenine at position 37 in tRNAs that read codons beginning with uridine, leading to the formation of N6-(dimethylallyl)adenosine (i(6)A).</text>
</comment>
<comment type="catalytic activity">
    <reaction evidence="1">
        <text>adenosine(37) in tRNA + dimethylallyl diphosphate = N(6)-dimethylallyladenosine(37) in tRNA + diphosphate</text>
        <dbReference type="Rhea" id="RHEA:26482"/>
        <dbReference type="Rhea" id="RHEA-COMP:10162"/>
        <dbReference type="Rhea" id="RHEA-COMP:10375"/>
        <dbReference type="ChEBI" id="CHEBI:33019"/>
        <dbReference type="ChEBI" id="CHEBI:57623"/>
        <dbReference type="ChEBI" id="CHEBI:74411"/>
        <dbReference type="ChEBI" id="CHEBI:74415"/>
        <dbReference type="EC" id="2.5.1.75"/>
    </reaction>
</comment>
<comment type="cofactor">
    <cofactor evidence="1">
        <name>Mg(2+)</name>
        <dbReference type="ChEBI" id="CHEBI:18420"/>
    </cofactor>
</comment>
<comment type="subunit">
    <text evidence="1">Monomer.</text>
</comment>
<comment type="similarity">
    <text evidence="1">Belongs to the IPP transferase family.</text>
</comment>
<name>MIAA_ONYPE</name>
<organism>
    <name type="scientific">Onion yellows phytoplasma (strain OY-M)</name>
    <dbReference type="NCBI Taxonomy" id="262768"/>
    <lineage>
        <taxon>Bacteria</taxon>
        <taxon>Bacillati</taxon>
        <taxon>Mycoplasmatota</taxon>
        <taxon>Mollicutes</taxon>
        <taxon>Acholeplasmatales</taxon>
        <taxon>Acholeplasmataceae</taxon>
        <taxon>Candidatus Phytoplasma</taxon>
        <taxon>16SrI (Aster yellows group)</taxon>
    </lineage>
</organism>
<evidence type="ECO:0000255" key="1">
    <source>
        <dbReference type="HAMAP-Rule" id="MF_00185"/>
    </source>
</evidence>
<sequence length="291" mass="33429">MKKVIAITGPTASGKTSLSIKIAKKFNLEIINCDSLQMYQKYDIGTAKITLEEAQGIKHHLLDFLAPGTNYSIYHFQKDARKKIEETPLPLFVGGSGLYLKSALFDYELTPKSLFLPPTSLPAIENMIDFIKQKDPQLIANLDLKNPRRILSAYQDLLEGTLRSQKNKKHNSLYSSLIFYLDIDRQILKKRVILRLEQMLKQGFIEEVNQIQTHFPNPNFNIIGYREIKALLEGKITLDQAKTLIIQKTMQYAKRQKTWFKNQIKPIILDALSPDLEKTTICLINDFLKTD</sequence>
<proteinExistence type="inferred from homology"/>
<accession>Q6YQU8</accession>